<reference key="1">
    <citation type="journal article" date="2002" name="Nature">
        <title>The genome sequence of Schizosaccharomyces pombe.</title>
        <authorList>
            <person name="Wood V."/>
            <person name="Gwilliam R."/>
            <person name="Rajandream M.A."/>
            <person name="Lyne M.H."/>
            <person name="Lyne R."/>
            <person name="Stewart A."/>
            <person name="Sgouros J.G."/>
            <person name="Peat N."/>
            <person name="Hayles J."/>
            <person name="Baker S.G."/>
            <person name="Basham D."/>
            <person name="Bowman S."/>
            <person name="Brooks K."/>
            <person name="Brown D."/>
            <person name="Brown S."/>
            <person name="Chillingworth T."/>
            <person name="Churcher C.M."/>
            <person name="Collins M."/>
            <person name="Connor R."/>
            <person name="Cronin A."/>
            <person name="Davis P."/>
            <person name="Feltwell T."/>
            <person name="Fraser A."/>
            <person name="Gentles S."/>
            <person name="Goble A."/>
            <person name="Hamlin N."/>
            <person name="Harris D.E."/>
            <person name="Hidalgo J."/>
            <person name="Hodgson G."/>
            <person name="Holroyd S."/>
            <person name="Hornsby T."/>
            <person name="Howarth S."/>
            <person name="Huckle E.J."/>
            <person name="Hunt S."/>
            <person name="Jagels K."/>
            <person name="James K.D."/>
            <person name="Jones L."/>
            <person name="Jones M."/>
            <person name="Leather S."/>
            <person name="McDonald S."/>
            <person name="McLean J."/>
            <person name="Mooney P."/>
            <person name="Moule S."/>
            <person name="Mungall K.L."/>
            <person name="Murphy L.D."/>
            <person name="Niblett D."/>
            <person name="Odell C."/>
            <person name="Oliver K."/>
            <person name="O'Neil S."/>
            <person name="Pearson D."/>
            <person name="Quail M.A."/>
            <person name="Rabbinowitsch E."/>
            <person name="Rutherford K.M."/>
            <person name="Rutter S."/>
            <person name="Saunders D."/>
            <person name="Seeger K."/>
            <person name="Sharp S."/>
            <person name="Skelton J."/>
            <person name="Simmonds M.N."/>
            <person name="Squares R."/>
            <person name="Squares S."/>
            <person name="Stevens K."/>
            <person name="Taylor K."/>
            <person name="Taylor R.G."/>
            <person name="Tivey A."/>
            <person name="Walsh S.V."/>
            <person name="Warren T."/>
            <person name="Whitehead S."/>
            <person name="Woodward J.R."/>
            <person name="Volckaert G."/>
            <person name="Aert R."/>
            <person name="Robben J."/>
            <person name="Grymonprez B."/>
            <person name="Weltjens I."/>
            <person name="Vanstreels E."/>
            <person name="Rieger M."/>
            <person name="Schaefer M."/>
            <person name="Mueller-Auer S."/>
            <person name="Gabel C."/>
            <person name="Fuchs M."/>
            <person name="Duesterhoeft A."/>
            <person name="Fritzc C."/>
            <person name="Holzer E."/>
            <person name="Moestl D."/>
            <person name="Hilbert H."/>
            <person name="Borzym K."/>
            <person name="Langer I."/>
            <person name="Beck A."/>
            <person name="Lehrach H."/>
            <person name="Reinhardt R."/>
            <person name="Pohl T.M."/>
            <person name="Eger P."/>
            <person name="Zimmermann W."/>
            <person name="Wedler H."/>
            <person name="Wambutt R."/>
            <person name="Purnelle B."/>
            <person name="Goffeau A."/>
            <person name="Cadieu E."/>
            <person name="Dreano S."/>
            <person name="Gloux S."/>
            <person name="Lelaure V."/>
            <person name="Mottier S."/>
            <person name="Galibert F."/>
            <person name="Aves S.J."/>
            <person name="Xiang Z."/>
            <person name="Hunt C."/>
            <person name="Moore K."/>
            <person name="Hurst S.M."/>
            <person name="Lucas M."/>
            <person name="Rochet M."/>
            <person name="Gaillardin C."/>
            <person name="Tallada V.A."/>
            <person name="Garzon A."/>
            <person name="Thode G."/>
            <person name="Daga R.R."/>
            <person name="Cruzado L."/>
            <person name="Jimenez J."/>
            <person name="Sanchez M."/>
            <person name="del Rey F."/>
            <person name="Benito J."/>
            <person name="Dominguez A."/>
            <person name="Revuelta J.L."/>
            <person name="Moreno S."/>
            <person name="Armstrong J."/>
            <person name="Forsburg S.L."/>
            <person name="Cerutti L."/>
            <person name="Lowe T."/>
            <person name="McCombie W.R."/>
            <person name="Paulsen I."/>
            <person name="Potashkin J."/>
            <person name="Shpakovski G.V."/>
            <person name="Ussery D."/>
            <person name="Barrell B.G."/>
            <person name="Nurse P."/>
        </authorList>
    </citation>
    <scope>NUCLEOTIDE SEQUENCE [LARGE SCALE GENOMIC DNA]</scope>
    <source>
        <strain>972 / ATCC 24843</strain>
    </source>
</reference>
<reference key="2">
    <citation type="journal article" date="2002" name="Mol. Cell. Biol.">
        <title>Proteomics analysis reveals stable multiprotein complexes in both fission and budding yeasts containing Myb-related Cdc5p/Cef1p, novel pre-mRNA splicing factors, and snRNAs.</title>
        <authorList>
            <person name="Ohi M.D."/>
            <person name="Link A.J."/>
            <person name="Ren L."/>
            <person name="Jennings J.L."/>
            <person name="McDonald W.H."/>
            <person name="Gould K.L."/>
        </authorList>
    </citation>
    <scope>IDENTIFICATION IN THE CWF COMPLEX</scope>
    <scope>IDENTIFICATION BY MASS SPECTROMETRY</scope>
</reference>
<reference key="3">
    <citation type="journal article" date="2006" name="Nat. Biotechnol.">
        <title>ORFeome cloning and global analysis of protein localization in the fission yeast Schizosaccharomyces pombe.</title>
        <authorList>
            <person name="Matsuyama A."/>
            <person name="Arai R."/>
            <person name="Yashiroda Y."/>
            <person name="Shirai A."/>
            <person name="Kamata A."/>
            <person name="Sekido S."/>
            <person name="Kobayashi Y."/>
            <person name="Hashimoto A."/>
            <person name="Hamamoto M."/>
            <person name="Hiraoka Y."/>
            <person name="Horinouchi S."/>
            <person name="Yoshida M."/>
        </authorList>
    </citation>
    <scope>SUBCELLULAR LOCATION [LARGE SCALE ANALYSIS]</scope>
</reference>
<reference key="4">
    <citation type="journal article" date="2014" name="Mol. Cell. Biol.">
        <title>Characterization and in vivo functional analysis of the Schizosaccharomyces pombe ICLN gene.</title>
        <authorList>
            <person name="Barbarossa A."/>
            <person name="Antoine E."/>
            <person name="Neel H."/>
            <person name="Gostan T."/>
            <person name="Soret J."/>
            <person name="Bordonne R."/>
        </authorList>
    </citation>
    <scope>INTERACTION WITH SAF5</scope>
</reference>
<proteinExistence type="evidence at protein level"/>
<gene>
    <name type="primary">smd1</name>
    <name type="ORF">SPAC27D7.07c</name>
</gene>
<evidence type="ECO:0000250" key="1">
    <source>
        <dbReference type="UniProtKB" id="P62314"/>
    </source>
</evidence>
<evidence type="ECO:0000255" key="2">
    <source>
        <dbReference type="PROSITE-ProRule" id="PRU01346"/>
    </source>
</evidence>
<evidence type="ECO:0000256" key="3">
    <source>
        <dbReference type="SAM" id="MobiDB-lite"/>
    </source>
</evidence>
<evidence type="ECO:0000269" key="4">
    <source>
    </source>
</evidence>
<evidence type="ECO:0000269" key="5">
    <source>
    </source>
</evidence>
<evidence type="ECO:0000269" key="6">
    <source>
    </source>
</evidence>
<evidence type="ECO:0000305" key="7"/>
<evidence type="ECO:0007829" key="8">
    <source>
        <dbReference type="PDB" id="9ESH"/>
    </source>
</evidence>
<evidence type="ECO:0007829" key="9">
    <source>
        <dbReference type="PDB" id="9ESI"/>
    </source>
</evidence>
<feature type="chain" id="PRO_0000122205" description="Small nuclear ribonucleoprotein Sm D1">
    <location>
        <begin position="1"/>
        <end position="117"/>
    </location>
</feature>
<feature type="domain" description="Sm" evidence="2">
    <location>
        <begin position="2"/>
        <end position="74"/>
    </location>
</feature>
<feature type="region of interest" description="Disordered" evidence="3">
    <location>
        <begin position="81"/>
        <end position="117"/>
    </location>
</feature>
<feature type="compositionally biased region" description="Basic residues" evidence="3">
    <location>
        <begin position="87"/>
        <end position="117"/>
    </location>
</feature>
<feature type="helix" evidence="9">
    <location>
        <begin position="5"/>
        <end position="9"/>
    </location>
</feature>
<feature type="strand" evidence="9">
    <location>
        <begin position="12"/>
        <end position="19"/>
    </location>
</feature>
<feature type="strand" evidence="8">
    <location>
        <begin position="20"/>
        <end position="22"/>
    </location>
</feature>
<feature type="strand" evidence="9">
    <location>
        <begin position="24"/>
        <end position="32"/>
    </location>
</feature>
<feature type="strand" evidence="9">
    <location>
        <begin position="38"/>
        <end position="46"/>
    </location>
</feature>
<feature type="strand" evidence="9">
    <location>
        <begin position="53"/>
        <end position="60"/>
    </location>
</feature>
<feature type="helix" evidence="9">
    <location>
        <begin position="62"/>
        <end position="64"/>
    </location>
</feature>
<feature type="strand" evidence="9">
    <location>
        <begin position="65"/>
        <end position="69"/>
    </location>
</feature>
<feature type="helix" evidence="9">
    <location>
        <begin position="76"/>
        <end position="80"/>
    </location>
</feature>
<sequence>MKLVRFLMKLTNETVSIELKNGTIVHGTITSVDMQMNTHLKAVKMTVKGREPVPVETLSIRGNNIRYYILPDSLPLDTLLIDDSTKPKQKKKEVVRGRGRGRGRGTRGRGRGASRGF</sequence>
<organism>
    <name type="scientific">Schizosaccharomyces pombe (strain 972 / ATCC 24843)</name>
    <name type="common">Fission yeast</name>
    <dbReference type="NCBI Taxonomy" id="284812"/>
    <lineage>
        <taxon>Eukaryota</taxon>
        <taxon>Fungi</taxon>
        <taxon>Dikarya</taxon>
        <taxon>Ascomycota</taxon>
        <taxon>Taphrinomycotina</taxon>
        <taxon>Schizosaccharomycetes</taxon>
        <taxon>Schizosaccharomycetales</taxon>
        <taxon>Schizosaccharomycetaceae</taxon>
        <taxon>Schizosaccharomyces</taxon>
    </lineage>
</organism>
<accession>O42661</accession>
<dbReference type="EMBL" id="CU329670">
    <property type="protein sequence ID" value="CAA15826.1"/>
    <property type="molecule type" value="Genomic_DNA"/>
</dbReference>
<dbReference type="PIR" id="T38440">
    <property type="entry name" value="T38440"/>
</dbReference>
<dbReference type="RefSeq" id="NP_594613.1">
    <property type="nucleotide sequence ID" value="NM_001020041.2"/>
</dbReference>
<dbReference type="PDB" id="3JB9">
    <property type="method" value="EM"/>
    <property type="resolution" value="3.60 A"/>
    <property type="chains" value="F/f=1-117"/>
</dbReference>
<dbReference type="PDB" id="9ESH">
    <property type="method" value="EM"/>
    <property type="resolution" value="3.20 A"/>
    <property type="chains" value="F=1-117"/>
</dbReference>
<dbReference type="PDB" id="9ESI">
    <property type="method" value="EM"/>
    <property type="resolution" value="3.10 A"/>
    <property type="chains" value="F=1-117"/>
</dbReference>
<dbReference type="PDBsum" id="3JB9"/>
<dbReference type="PDBsum" id="9ESH"/>
<dbReference type="PDBsum" id="9ESI"/>
<dbReference type="EMDB" id="EMD-19941"/>
<dbReference type="EMDB" id="EMD-19942"/>
<dbReference type="SMR" id="O42661"/>
<dbReference type="BioGRID" id="279143">
    <property type="interactions" value="26"/>
</dbReference>
<dbReference type="FunCoup" id="O42661">
    <property type="interactions" value="701"/>
</dbReference>
<dbReference type="IntAct" id="O42661">
    <property type="interactions" value="7"/>
</dbReference>
<dbReference type="STRING" id="284812.O42661"/>
<dbReference type="PaxDb" id="4896-SPAC27D7.07c.1"/>
<dbReference type="EnsemblFungi" id="SPAC27D7.07c.1">
    <property type="protein sequence ID" value="SPAC27D7.07c.1:pep"/>
    <property type="gene ID" value="SPAC27D7.07c"/>
</dbReference>
<dbReference type="GeneID" id="2542690"/>
<dbReference type="KEGG" id="spo:2542690"/>
<dbReference type="PomBase" id="SPAC27D7.07c">
    <property type="gene designation" value="smd1"/>
</dbReference>
<dbReference type="VEuPathDB" id="FungiDB:SPAC27D7.07c"/>
<dbReference type="eggNOG" id="KOG3428">
    <property type="taxonomic scope" value="Eukaryota"/>
</dbReference>
<dbReference type="HOGENOM" id="CLU_123956_3_0_1"/>
<dbReference type="InParanoid" id="O42661"/>
<dbReference type="OMA" id="TFLMKLT"/>
<dbReference type="PhylomeDB" id="O42661"/>
<dbReference type="Reactome" id="R-SPO-72163">
    <property type="pathway name" value="mRNA Splicing - Major Pathway"/>
</dbReference>
<dbReference type="EvolutionaryTrace" id="O42661"/>
<dbReference type="PRO" id="PR:O42661"/>
<dbReference type="Proteomes" id="UP000002485">
    <property type="component" value="Chromosome I"/>
</dbReference>
<dbReference type="GO" id="GO:0071013">
    <property type="term" value="C:catalytic step 2 spliceosome"/>
    <property type="evidence" value="ECO:0000318"/>
    <property type="project" value="GO_Central"/>
</dbReference>
<dbReference type="GO" id="GO:0000243">
    <property type="term" value="C:commitment complex"/>
    <property type="evidence" value="ECO:0000318"/>
    <property type="project" value="GO_Central"/>
</dbReference>
<dbReference type="GO" id="GO:0005829">
    <property type="term" value="C:cytosol"/>
    <property type="evidence" value="ECO:0007005"/>
    <property type="project" value="PomBase"/>
</dbReference>
<dbReference type="GO" id="GO:0005634">
    <property type="term" value="C:nucleus"/>
    <property type="evidence" value="ECO:0007005"/>
    <property type="project" value="PomBase"/>
</dbReference>
<dbReference type="GO" id="GO:0034715">
    <property type="term" value="C:pICln-Sm protein complex"/>
    <property type="evidence" value="ECO:0000318"/>
    <property type="project" value="GO_Central"/>
</dbReference>
<dbReference type="GO" id="GO:0071014">
    <property type="term" value="C:post-mRNA release spliceosomal complex"/>
    <property type="evidence" value="ECO:0000314"/>
    <property type="project" value="PomBase"/>
</dbReference>
<dbReference type="GO" id="GO:0071011">
    <property type="term" value="C:precatalytic spliceosome"/>
    <property type="evidence" value="ECO:0000318"/>
    <property type="project" value="GO_Central"/>
</dbReference>
<dbReference type="GO" id="GO:0034719">
    <property type="term" value="C:SMN-Sm protein complex"/>
    <property type="evidence" value="ECO:0000318"/>
    <property type="project" value="GO_Central"/>
</dbReference>
<dbReference type="GO" id="GO:0097526">
    <property type="term" value="C:spliceosomal tri-snRNP complex"/>
    <property type="evidence" value="ECO:0000318"/>
    <property type="project" value="GO_Central"/>
</dbReference>
<dbReference type="GO" id="GO:0005685">
    <property type="term" value="C:U1 snRNP"/>
    <property type="evidence" value="ECO:0000314"/>
    <property type="project" value="PomBase"/>
</dbReference>
<dbReference type="GO" id="GO:0005686">
    <property type="term" value="C:U2 snRNP"/>
    <property type="evidence" value="ECO:0000314"/>
    <property type="project" value="PomBase"/>
</dbReference>
<dbReference type="GO" id="GO:0071004">
    <property type="term" value="C:U2-type prespliceosome"/>
    <property type="evidence" value="ECO:0000266"/>
    <property type="project" value="PomBase"/>
</dbReference>
<dbReference type="GO" id="GO:0005687">
    <property type="term" value="C:U4 snRNP"/>
    <property type="evidence" value="ECO:0000318"/>
    <property type="project" value="GO_Central"/>
</dbReference>
<dbReference type="GO" id="GO:0046540">
    <property type="term" value="C:U4/U6 x U5 tri-snRNP complex"/>
    <property type="evidence" value="ECO:0000250"/>
    <property type="project" value="PomBase"/>
</dbReference>
<dbReference type="GO" id="GO:0005682">
    <property type="term" value="C:U5 snRNP"/>
    <property type="evidence" value="ECO:0000314"/>
    <property type="project" value="PomBase"/>
</dbReference>
<dbReference type="GO" id="GO:0003729">
    <property type="term" value="F:mRNA binding"/>
    <property type="evidence" value="ECO:0000250"/>
    <property type="project" value="PomBase"/>
</dbReference>
<dbReference type="GO" id="GO:0003723">
    <property type="term" value="F:RNA binding"/>
    <property type="evidence" value="ECO:0000318"/>
    <property type="project" value="GO_Central"/>
</dbReference>
<dbReference type="GO" id="GO:0000395">
    <property type="term" value="P:mRNA 5'-splice site recognition"/>
    <property type="evidence" value="ECO:0000305"/>
    <property type="project" value="PomBase"/>
</dbReference>
<dbReference type="GO" id="GO:0045292">
    <property type="term" value="P:mRNA cis splicing, via spliceosome"/>
    <property type="evidence" value="ECO:0000269"/>
    <property type="project" value="PomBase"/>
</dbReference>
<dbReference type="GO" id="GO:0000387">
    <property type="term" value="P:spliceosomal snRNP assembly"/>
    <property type="evidence" value="ECO:0000318"/>
    <property type="project" value="GO_Central"/>
</dbReference>
<dbReference type="CDD" id="cd01724">
    <property type="entry name" value="Sm_D1"/>
    <property type="match status" value="1"/>
</dbReference>
<dbReference type="FunFam" id="2.30.30.100:FF:000016">
    <property type="entry name" value="Small nuclear ribonucleoprotein Sm D1"/>
    <property type="match status" value="1"/>
</dbReference>
<dbReference type="Gene3D" id="2.30.30.100">
    <property type="match status" value="1"/>
</dbReference>
<dbReference type="InterPro" id="IPR027141">
    <property type="entry name" value="LSm4/Sm_D1/D3"/>
</dbReference>
<dbReference type="InterPro" id="IPR010920">
    <property type="entry name" value="LSM_dom_sf"/>
</dbReference>
<dbReference type="InterPro" id="IPR047575">
    <property type="entry name" value="Sm"/>
</dbReference>
<dbReference type="InterPro" id="IPR034102">
    <property type="entry name" value="Sm_D1"/>
</dbReference>
<dbReference type="InterPro" id="IPR001163">
    <property type="entry name" value="Sm_dom_euk/arc"/>
</dbReference>
<dbReference type="PANTHER" id="PTHR23338">
    <property type="entry name" value="SMALL NUCLEAR RIBONUCLEOPROTEIN SM"/>
    <property type="match status" value="1"/>
</dbReference>
<dbReference type="Pfam" id="PF01423">
    <property type="entry name" value="LSM"/>
    <property type="match status" value="1"/>
</dbReference>
<dbReference type="SMART" id="SM00651">
    <property type="entry name" value="Sm"/>
    <property type="match status" value="1"/>
</dbReference>
<dbReference type="SUPFAM" id="SSF50182">
    <property type="entry name" value="Sm-like ribonucleoproteins"/>
    <property type="match status" value="1"/>
</dbReference>
<dbReference type="PROSITE" id="PS52002">
    <property type="entry name" value="SM"/>
    <property type="match status" value="1"/>
</dbReference>
<comment type="function">
    <text evidence="1">Plays a role in pre-mRNA splicing as a core component of the spliceosomal U1, U2, U4 and U5 small nuclear ribonucleoproteins (snRNPs), the building blocks of the spliceosome (By similarity).</text>
</comment>
<comment type="subunit">
    <text evidence="4 6">Belongs to the 40S cdc5-associated complex (or cwf complex), a spliceosome sub-complex reminiscent of a late-stage spliceosome composed of the U2, U5 and U6 snRNAs and at least brr2, cdc5, cwf2/prp3, cwf3/syf1, cwf4/syf3, cwf5/ecm2, spp42/cwf6, cwf7/spf27, cwf8, cwf9, cwf10, cwf11, cwf12, prp45/cwf13, cwf14, cwf15, cwf16, cwf17, cwf18, cwf19, cwf20, cwf21, cwf22, cwf23, cwf24, cwf25, cwf26, cyp7/cwf27, cwf28, cwf29/ist3, lea1, msl1, prp5/cwf1, prp10, prp12/sap130, prp17, prp22, sap61, sap62, sap114, sap145, slu7, smb1, smd1, smd3, smf1, smg1 and syf2 (PubMed:11884590). Interacts with saf5; the interaction is direct (PubMed:24298023).</text>
</comment>
<comment type="subcellular location">
    <subcellularLocation>
        <location evidence="5 6">Nucleus</location>
    </subcellularLocation>
    <subcellularLocation>
        <location evidence="5 6">Cytoplasm</location>
    </subcellularLocation>
    <text evidence="6">Localizes to the nucleus predominantly.</text>
</comment>
<comment type="similarity">
    <text evidence="7">Belongs to the snRNP core protein family.</text>
</comment>
<name>SMD1_SCHPO</name>
<protein>
    <recommendedName>
        <fullName>Small nuclear ribonucleoprotein Sm D1</fullName>
        <shortName>Sm-D1</shortName>
    </recommendedName>
    <alternativeName>
        <fullName>snRNP core protein D1</fullName>
    </alternativeName>
</protein>
<keyword id="KW-0002">3D-structure</keyword>
<keyword id="KW-0963">Cytoplasm</keyword>
<keyword id="KW-0507">mRNA processing</keyword>
<keyword id="KW-0508">mRNA splicing</keyword>
<keyword id="KW-0539">Nucleus</keyword>
<keyword id="KW-1185">Reference proteome</keyword>
<keyword id="KW-0687">Ribonucleoprotein</keyword>
<keyword id="KW-0747">Spliceosome</keyword>